<comment type="function">
    <text evidence="1">RNaseP catalyzes the removal of the 5'-leader sequence from pre-tRNA to produce the mature 5'-terminus. It can also cleave other RNA substrates such as 4.5S RNA. The protein component plays an auxiliary but essential role in vivo by binding to the 5'-leader sequence and broadening the substrate specificity of the ribozyme.</text>
</comment>
<comment type="catalytic activity">
    <reaction evidence="1">
        <text>Endonucleolytic cleavage of RNA, removing 5'-extranucleotides from tRNA precursor.</text>
        <dbReference type="EC" id="3.1.26.5"/>
    </reaction>
</comment>
<comment type="subunit">
    <text evidence="1">Consists of a catalytic RNA component (M1 or rnpB) and a protein subunit.</text>
</comment>
<comment type="similarity">
    <text evidence="1">Belongs to the RnpA family.</text>
</comment>
<dbReference type="EC" id="3.1.26.5" evidence="1"/>
<dbReference type="EMBL" id="AP009044">
    <property type="protein sequence ID" value="BAF56011.1"/>
    <property type="molecule type" value="Genomic_DNA"/>
</dbReference>
<dbReference type="RefSeq" id="WP_011898167.1">
    <property type="nucleotide sequence ID" value="NC_009342.1"/>
</dbReference>
<dbReference type="SMR" id="A4QIE5"/>
<dbReference type="KEGG" id="cgt:cgR_2988"/>
<dbReference type="HOGENOM" id="CLU_117179_4_1_11"/>
<dbReference type="PhylomeDB" id="A4QIE5"/>
<dbReference type="Proteomes" id="UP000006698">
    <property type="component" value="Chromosome"/>
</dbReference>
<dbReference type="GO" id="GO:0030677">
    <property type="term" value="C:ribonuclease P complex"/>
    <property type="evidence" value="ECO:0007669"/>
    <property type="project" value="TreeGrafter"/>
</dbReference>
<dbReference type="GO" id="GO:0042781">
    <property type="term" value="F:3'-tRNA processing endoribonuclease activity"/>
    <property type="evidence" value="ECO:0007669"/>
    <property type="project" value="TreeGrafter"/>
</dbReference>
<dbReference type="GO" id="GO:0004526">
    <property type="term" value="F:ribonuclease P activity"/>
    <property type="evidence" value="ECO:0007669"/>
    <property type="project" value="UniProtKB-UniRule"/>
</dbReference>
<dbReference type="GO" id="GO:0000049">
    <property type="term" value="F:tRNA binding"/>
    <property type="evidence" value="ECO:0007669"/>
    <property type="project" value="UniProtKB-UniRule"/>
</dbReference>
<dbReference type="GO" id="GO:0001682">
    <property type="term" value="P:tRNA 5'-leader removal"/>
    <property type="evidence" value="ECO:0007669"/>
    <property type="project" value="UniProtKB-UniRule"/>
</dbReference>
<dbReference type="Gene3D" id="3.30.230.10">
    <property type="match status" value="1"/>
</dbReference>
<dbReference type="HAMAP" id="MF_00227">
    <property type="entry name" value="RNase_P"/>
    <property type="match status" value="1"/>
</dbReference>
<dbReference type="InterPro" id="IPR020568">
    <property type="entry name" value="Ribosomal_Su5_D2-typ_SF"/>
</dbReference>
<dbReference type="InterPro" id="IPR014721">
    <property type="entry name" value="Ribsml_uS5_D2-typ_fold_subgr"/>
</dbReference>
<dbReference type="InterPro" id="IPR000100">
    <property type="entry name" value="RNase_P"/>
</dbReference>
<dbReference type="NCBIfam" id="TIGR00188">
    <property type="entry name" value="rnpA"/>
    <property type="match status" value="1"/>
</dbReference>
<dbReference type="PANTHER" id="PTHR33992">
    <property type="entry name" value="RIBONUCLEASE P PROTEIN COMPONENT"/>
    <property type="match status" value="1"/>
</dbReference>
<dbReference type="PANTHER" id="PTHR33992:SF1">
    <property type="entry name" value="RIBONUCLEASE P PROTEIN COMPONENT"/>
    <property type="match status" value="1"/>
</dbReference>
<dbReference type="Pfam" id="PF00825">
    <property type="entry name" value="Ribonuclease_P"/>
    <property type="match status" value="1"/>
</dbReference>
<dbReference type="SUPFAM" id="SSF54211">
    <property type="entry name" value="Ribosomal protein S5 domain 2-like"/>
    <property type="match status" value="1"/>
</dbReference>
<accession>A4QIE5</accession>
<gene>
    <name evidence="1" type="primary">rnpA</name>
    <name type="ordered locus">cgR_2988</name>
</gene>
<sequence length="133" mass="14535">MLPAQHKLNSSMQFRTVMRKGRRAGSKTVVVHLWDSAESLDGTEKQGEVASFGGPRFGLVVSKAVGNAVVRHRTSRRLRHICASIVEKSPELLSPTHHVVIRALAGAGNAPSAELERDIRYGLGKTSRVRTNK</sequence>
<evidence type="ECO:0000255" key="1">
    <source>
        <dbReference type="HAMAP-Rule" id="MF_00227"/>
    </source>
</evidence>
<protein>
    <recommendedName>
        <fullName evidence="1">Ribonuclease P protein component</fullName>
        <shortName evidence="1">RNase P protein</shortName>
        <shortName evidence="1">RNaseP protein</shortName>
        <ecNumber evidence="1">3.1.26.5</ecNumber>
    </recommendedName>
    <alternativeName>
        <fullName evidence="1">Protein C5</fullName>
    </alternativeName>
</protein>
<feature type="chain" id="PRO_1000021401" description="Ribonuclease P protein component">
    <location>
        <begin position="1"/>
        <end position="133"/>
    </location>
</feature>
<keyword id="KW-0255">Endonuclease</keyword>
<keyword id="KW-0378">Hydrolase</keyword>
<keyword id="KW-0540">Nuclease</keyword>
<keyword id="KW-0694">RNA-binding</keyword>
<keyword id="KW-0819">tRNA processing</keyword>
<reference key="1">
    <citation type="journal article" date="2007" name="Microbiology">
        <title>Comparative analysis of the Corynebacterium glutamicum group and complete genome sequence of strain R.</title>
        <authorList>
            <person name="Yukawa H."/>
            <person name="Omumasaba C.A."/>
            <person name="Nonaka H."/>
            <person name="Kos P."/>
            <person name="Okai N."/>
            <person name="Suzuki N."/>
            <person name="Suda M."/>
            <person name="Tsuge Y."/>
            <person name="Watanabe J."/>
            <person name="Ikeda Y."/>
            <person name="Vertes A.A."/>
            <person name="Inui M."/>
        </authorList>
    </citation>
    <scope>NUCLEOTIDE SEQUENCE [LARGE SCALE GENOMIC DNA]</scope>
    <source>
        <strain>R</strain>
    </source>
</reference>
<organism>
    <name type="scientific">Corynebacterium glutamicum (strain R)</name>
    <dbReference type="NCBI Taxonomy" id="340322"/>
    <lineage>
        <taxon>Bacteria</taxon>
        <taxon>Bacillati</taxon>
        <taxon>Actinomycetota</taxon>
        <taxon>Actinomycetes</taxon>
        <taxon>Mycobacteriales</taxon>
        <taxon>Corynebacteriaceae</taxon>
        <taxon>Corynebacterium</taxon>
    </lineage>
</organism>
<proteinExistence type="inferred from homology"/>
<name>RNPA_CORGB</name>